<accession>Q5HKB7</accession>
<organism>
    <name type="scientific">Staphylococcus epidermidis (strain ATCC 35984 / DSM 28319 / BCRC 17069 / CCUG 31568 / BM 3577 / RP62A)</name>
    <dbReference type="NCBI Taxonomy" id="176279"/>
    <lineage>
        <taxon>Bacteria</taxon>
        <taxon>Bacillati</taxon>
        <taxon>Bacillota</taxon>
        <taxon>Bacilli</taxon>
        <taxon>Bacillales</taxon>
        <taxon>Staphylococcaceae</taxon>
        <taxon>Staphylococcus</taxon>
    </lineage>
</organism>
<keyword id="KW-0059">Arsenical resistance</keyword>
<keyword id="KW-0963">Cytoplasm</keyword>
<keyword id="KW-1015">Disulfide bond</keyword>
<keyword id="KW-0560">Oxidoreductase</keyword>
<keyword id="KW-0676">Redox-active center</keyword>
<keyword id="KW-1185">Reference proteome</keyword>
<reference key="1">
    <citation type="journal article" date="2005" name="J. Bacteriol.">
        <title>Insights on evolution of virulence and resistance from the complete genome analysis of an early methicillin-resistant Staphylococcus aureus strain and a biofilm-producing methicillin-resistant Staphylococcus epidermidis strain.</title>
        <authorList>
            <person name="Gill S.R."/>
            <person name="Fouts D.E."/>
            <person name="Archer G.L."/>
            <person name="Mongodin E.F."/>
            <person name="DeBoy R.T."/>
            <person name="Ravel J."/>
            <person name="Paulsen I.T."/>
            <person name="Kolonay J.F."/>
            <person name="Brinkac L.M."/>
            <person name="Beanan M.J."/>
            <person name="Dodson R.J."/>
            <person name="Daugherty S.C."/>
            <person name="Madupu R."/>
            <person name="Angiuoli S.V."/>
            <person name="Durkin A.S."/>
            <person name="Haft D.H."/>
            <person name="Vamathevan J.J."/>
            <person name="Khouri H."/>
            <person name="Utterback T.R."/>
            <person name="Lee C."/>
            <person name="Dimitrov G."/>
            <person name="Jiang L."/>
            <person name="Qin H."/>
            <person name="Weidman J."/>
            <person name="Tran K."/>
            <person name="Kang K.H."/>
            <person name="Hance I.R."/>
            <person name="Nelson K.E."/>
            <person name="Fraser C.M."/>
        </authorList>
    </citation>
    <scope>NUCLEOTIDE SEQUENCE [LARGE SCALE GENOMIC DNA]</scope>
    <source>
        <strain>ATCC 35984 / DSM 28319 / BCRC 17069 / CCUG 31568 / BM 3577 / RP62A</strain>
    </source>
</reference>
<protein>
    <recommendedName>
        <fullName evidence="1">Arsenate reductase 2</fullName>
        <ecNumber evidence="1">1.20.4.4</ecNumber>
    </recommendedName>
</protein>
<name>ARSC2_STAEQ</name>
<evidence type="ECO:0000255" key="1">
    <source>
        <dbReference type="HAMAP-Rule" id="MF_01624"/>
    </source>
</evidence>
<gene>
    <name evidence="1" type="primary">arsC2</name>
    <name type="ordered locus">SERP2431</name>
</gene>
<comment type="function">
    <text evidence="1">Catalyzes the reduction of arsenate [As(V)] to arsenite [As(III)].</text>
</comment>
<comment type="catalytic activity">
    <reaction evidence="1">
        <text>arsenate + [thioredoxin]-dithiol + H(+) = arsenite + [thioredoxin]-disulfide + H2O</text>
        <dbReference type="Rhea" id="RHEA:43848"/>
        <dbReference type="Rhea" id="RHEA-COMP:10698"/>
        <dbReference type="Rhea" id="RHEA-COMP:10700"/>
        <dbReference type="ChEBI" id="CHEBI:15377"/>
        <dbReference type="ChEBI" id="CHEBI:15378"/>
        <dbReference type="ChEBI" id="CHEBI:29242"/>
        <dbReference type="ChEBI" id="CHEBI:29950"/>
        <dbReference type="ChEBI" id="CHEBI:48597"/>
        <dbReference type="ChEBI" id="CHEBI:50058"/>
        <dbReference type="EC" id="1.20.4.4"/>
    </reaction>
</comment>
<comment type="subcellular location">
    <subcellularLocation>
        <location evidence="1">Cytoplasm</location>
    </subcellularLocation>
</comment>
<comment type="similarity">
    <text evidence="1">Belongs to the low molecular weight phosphotyrosine protein phosphatase family. Thioredoxin-coupled ArsC subfamily.</text>
</comment>
<dbReference type="EC" id="1.20.4.4" evidence="1"/>
<dbReference type="EMBL" id="CP000029">
    <property type="protein sequence ID" value="AAW53288.1"/>
    <property type="molecule type" value="Genomic_DNA"/>
</dbReference>
<dbReference type="SMR" id="Q5HKB7"/>
<dbReference type="STRING" id="176279.SERP2431"/>
<dbReference type="KEGG" id="ser:SERP2431"/>
<dbReference type="eggNOG" id="COG0394">
    <property type="taxonomic scope" value="Bacteria"/>
</dbReference>
<dbReference type="HOGENOM" id="CLU_071415_3_2_9"/>
<dbReference type="Proteomes" id="UP000000531">
    <property type="component" value="Chromosome"/>
</dbReference>
<dbReference type="GO" id="GO:0005737">
    <property type="term" value="C:cytoplasm"/>
    <property type="evidence" value="ECO:0007669"/>
    <property type="project" value="UniProtKB-SubCell"/>
</dbReference>
<dbReference type="GO" id="GO:0030612">
    <property type="term" value="F:arsenate reductase (thioredoxin) activity"/>
    <property type="evidence" value="ECO:0007669"/>
    <property type="project" value="UniProtKB-UniRule"/>
</dbReference>
<dbReference type="GO" id="GO:0004725">
    <property type="term" value="F:protein tyrosine phosphatase activity"/>
    <property type="evidence" value="ECO:0007669"/>
    <property type="project" value="InterPro"/>
</dbReference>
<dbReference type="GO" id="GO:0046685">
    <property type="term" value="P:response to arsenic-containing substance"/>
    <property type="evidence" value="ECO:0007669"/>
    <property type="project" value="UniProtKB-KW"/>
</dbReference>
<dbReference type="CDD" id="cd16345">
    <property type="entry name" value="LMWP_ArsC"/>
    <property type="match status" value="1"/>
</dbReference>
<dbReference type="FunFam" id="3.40.50.2300:FF:000237">
    <property type="entry name" value="Arsenate reductase"/>
    <property type="match status" value="1"/>
</dbReference>
<dbReference type="Gene3D" id="3.40.50.2300">
    <property type="match status" value="1"/>
</dbReference>
<dbReference type="HAMAP" id="MF_01624">
    <property type="entry name" value="Arsenate_reduct"/>
    <property type="match status" value="1"/>
</dbReference>
<dbReference type="InterPro" id="IPR014064">
    <property type="entry name" value="Arsenate_reductase_ArsC"/>
</dbReference>
<dbReference type="InterPro" id="IPR023485">
    <property type="entry name" value="Ptyr_pPase"/>
</dbReference>
<dbReference type="InterPro" id="IPR036196">
    <property type="entry name" value="Ptyr_pPase_sf"/>
</dbReference>
<dbReference type="NCBIfam" id="TIGR02691">
    <property type="entry name" value="arsC_pI258_fam"/>
    <property type="match status" value="1"/>
</dbReference>
<dbReference type="NCBIfam" id="NF010053">
    <property type="entry name" value="PRK13530.1"/>
    <property type="match status" value="1"/>
</dbReference>
<dbReference type="PANTHER" id="PTHR43428">
    <property type="entry name" value="ARSENATE REDUCTASE"/>
    <property type="match status" value="1"/>
</dbReference>
<dbReference type="PANTHER" id="PTHR43428:SF1">
    <property type="entry name" value="ARSENATE REDUCTASE"/>
    <property type="match status" value="1"/>
</dbReference>
<dbReference type="Pfam" id="PF01451">
    <property type="entry name" value="LMWPc"/>
    <property type="match status" value="1"/>
</dbReference>
<dbReference type="SMART" id="SM00226">
    <property type="entry name" value="LMWPc"/>
    <property type="match status" value="1"/>
</dbReference>
<dbReference type="SUPFAM" id="SSF52788">
    <property type="entry name" value="Phosphotyrosine protein phosphatases I"/>
    <property type="match status" value="1"/>
</dbReference>
<sequence length="131" mass="14693">MDKKTIYFICTGNSCRSQMAEGWGKKILGDEWQVYSGGIEAHGVNPKAIEAMKEVGIDISNHTSNLIDQNILHQSDLVVTLCSDADKNCPILPPSVKKEHWGFDDPAGKPWSEFQRVRDEIKTAIESFKTR</sequence>
<feature type="chain" id="PRO_0000162529" description="Arsenate reductase 2">
    <location>
        <begin position="1"/>
        <end position="131"/>
    </location>
</feature>
<feature type="active site" description="Nucleophile" evidence="1">
    <location>
        <position position="10"/>
    </location>
</feature>
<feature type="active site" description="Nucleophile" evidence="1">
    <location>
        <position position="82"/>
    </location>
</feature>
<feature type="active site" description="Nucleophile" evidence="1">
    <location>
        <position position="89"/>
    </location>
</feature>
<feature type="disulfide bond" description="Redox-active; alternate" evidence="1">
    <location>
        <begin position="10"/>
        <end position="82"/>
    </location>
</feature>
<feature type="disulfide bond" description="Redox-active; alternate" evidence="1">
    <location>
        <begin position="82"/>
        <end position="89"/>
    </location>
</feature>
<proteinExistence type="inferred from homology"/>